<name>SYFB_SYNE7</name>
<proteinExistence type="inferred from homology"/>
<evidence type="ECO:0000250" key="1"/>
<evidence type="ECO:0000305" key="2"/>
<sequence length="810" mass="89932">MRISLNWLRELVQVDLEPEVLAEKLTLAGFEVEEIEDRRTWAAGVVVGRVLEREQHPNADRLSVCQVEIGQAEPVTIVCGASNVRADIWVAVATLGSYLPCIDLKLKPTKLRGVRSEGMICSLSELGLTKESEGIHIFPEDAGLQAGQPVGPLLGLDDVVLDLTSTANRADALSLIGIAREVRALTAATLTLPEVELQTYPELPCLAISLQSEACSHYSGTIIEGVTIAPSPEWLQKRLQLAGIRTINNVVDITNYILLEYGQPLHAFDRQKLQAIAGSSDLAIGVRSAQAGETLKTLDDQERTLAEAALVITAGDCPVALAGVMGGADSEVSQETTQLLLEAAWFEPIAVRRSARSQGLRTEASARYERGVNVTELPIATQRAIDLLLQIAGGTVISQTVATTTQTEPEHSITLRLQRINELLGPVQAEDEELKDLGADDIERLLTAIGCHLTLVDDAVWQVRVPPYRYRDLEREIDLIEEVARLYGYDNFGETLPPLGSDEGALSIDESLRRQIRAVCRGVGLTELQHYSLVKPGSDRQVHLANPLLAEYSALRLDLLSGLIDAFQYNWEQGNGPLWGFEIGRIFWREEDGFFEADRMGGILGGDPSRGRWQRGGKEQAIDWYAAKGVLEEIFERFGLTIEFQPDRQDDRFHPGRTASLWLQGDRLGRFGQLHPSLCEGRGLPAEVYAFELDLDVWLDHLDQPERQVPRFQPYSSFPASDRDLAFFVDQSVTVAELERIIRRQGGALLSEVELFDQYCGEHVPENQRSLAFRLTYRASDRTLTEAEVEPVHDQVRQSLVERFRVTLRS</sequence>
<comment type="catalytic activity">
    <reaction>
        <text>tRNA(Phe) + L-phenylalanine + ATP = L-phenylalanyl-tRNA(Phe) + AMP + diphosphate + H(+)</text>
        <dbReference type="Rhea" id="RHEA:19413"/>
        <dbReference type="Rhea" id="RHEA-COMP:9668"/>
        <dbReference type="Rhea" id="RHEA-COMP:9699"/>
        <dbReference type="ChEBI" id="CHEBI:15378"/>
        <dbReference type="ChEBI" id="CHEBI:30616"/>
        <dbReference type="ChEBI" id="CHEBI:33019"/>
        <dbReference type="ChEBI" id="CHEBI:58095"/>
        <dbReference type="ChEBI" id="CHEBI:78442"/>
        <dbReference type="ChEBI" id="CHEBI:78531"/>
        <dbReference type="ChEBI" id="CHEBI:456215"/>
        <dbReference type="EC" id="6.1.1.20"/>
    </reaction>
</comment>
<comment type="cofactor">
    <cofactor evidence="1">
        <name>Mg(2+)</name>
        <dbReference type="ChEBI" id="CHEBI:18420"/>
    </cofactor>
    <text evidence="1">Binds 2 magnesium ions per tetramer.</text>
</comment>
<comment type="subunit">
    <text evidence="1">Tetramer of two alpha and two beta subunits.</text>
</comment>
<comment type="subcellular location">
    <subcellularLocation>
        <location>Cytoplasm</location>
    </subcellularLocation>
</comment>
<comment type="similarity">
    <text evidence="2">Belongs to the phenylalanyl-tRNA synthetase beta subunit family. Type 1 subfamily.</text>
</comment>
<dbReference type="EC" id="6.1.1.20"/>
<dbReference type="EMBL" id="X94345">
    <property type="protein sequence ID" value="CAA64071.1"/>
    <property type="molecule type" value="Genomic_DNA"/>
</dbReference>
<dbReference type="EMBL" id="CP000100">
    <property type="protein sequence ID" value="ABB57323.1"/>
    <property type="molecule type" value="Genomic_DNA"/>
</dbReference>
<dbReference type="RefSeq" id="WP_011377966.1">
    <property type="nucleotide sequence ID" value="NZ_JACJTX010000003.1"/>
</dbReference>
<dbReference type="SMR" id="P74764"/>
<dbReference type="STRING" id="1140.Synpcc7942_1293"/>
<dbReference type="PaxDb" id="1140-Synpcc7942_1293"/>
<dbReference type="GeneID" id="72430154"/>
<dbReference type="KEGG" id="syf:Synpcc7942_1293"/>
<dbReference type="eggNOG" id="COG0072">
    <property type="taxonomic scope" value="Bacteria"/>
</dbReference>
<dbReference type="HOGENOM" id="CLU_016891_0_0_3"/>
<dbReference type="OrthoDB" id="9805455at2"/>
<dbReference type="BioCyc" id="SYNEL:SYNPCC7942_1293-MONOMER"/>
<dbReference type="Proteomes" id="UP000889800">
    <property type="component" value="Chromosome"/>
</dbReference>
<dbReference type="GO" id="GO:0009328">
    <property type="term" value="C:phenylalanine-tRNA ligase complex"/>
    <property type="evidence" value="ECO:0007669"/>
    <property type="project" value="TreeGrafter"/>
</dbReference>
<dbReference type="GO" id="GO:0005524">
    <property type="term" value="F:ATP binding"/>
    <property type="evidence" value="ECO:0007669"/>
    <property type="project" value="UniProtKB-UniRule"/>
</dbReference>
<dbReference type="GO" id="GO:0000287">
    <property type="term" value="F:magnesium ion binding"/>
    <property type="evidence" value="ECO:0007669"/>
    <property type="project" value="UniProtKB-UniRule"/>
</dbReference>
<dbReference type="GO" id="GO:0004826">
    <property type="term" value="F:phenylalanine-tRNA ligase activity"/>
    <property type="evidence" value="ECO:0007669"/>
    <property type="project" value="UniProtKB-UniRule"/>
</dbReference>
<dbReference type="GO" id="GO:0000049">
    <property type="term" value="F:tRNA binding"/>
    <property type="evidence" value="ECO:0007669"/>
    <property type="project" value="UniProtKB-KW"/>
</dbReference>
<dbReference type="GO" id="GO:0006432">
    <property type="term" value="P:phenylalanyl-tRNA aminoacylation"/>
    <property type="evidence" value="ECO:0007669"/>
    <property type="project" value="UniProtKB-UniRule"/>
</dbReference>
<dbReference type="CDD" id="cd00769">
    <property type="entry name" value="PheRS_beta_core"/>
    <property type="match status" value="1"/>
</dbReference>
<dbReference type="CDD" id="cd02796">
    <property type="entry name" value="tRNA_bind_bactPheRS"/>
    <property type="match status" value="1"/>
</dbReference>
<dbReference type="FunFam" id="2.40.50.140:FF:000045">
    <property type="entry name" value="Phenylalanine--tRNA ligase beta subunit"/>
    <property type="match status" value="1"/>
</dbReference>
<dbReference type="FunFam" id="3.30.70.380:FF:000001">
    <property type="entry name" value="Phenylalanine--tRNA ligase beta subunit"/>
    <property type="match status" value="1"/>
</dbReference>
<dbReference type="FunFam" id="3.50.40.10:FF:000001">
    <property type="entry name" value="Phenylalanine--tRNA ligase beta subunit"/>
    <property type="match status" value="1"/>
</dbReference>
<dbReference type="Gene3D" id="3.30.56.10">
    <property type="match status" value="2"/>
</dbReference>
<dbReference type="Gene3D" id="3.30.930.10">
    <property type="entry name" value="Bira Bifunctional Protein, Domain 2"/>
    <property type="match status" value="1"/>
</dbReference>
<dbReference type="Gene3D" id="3.30.70.380">
    <property type="entry name" value="Ferrodoxin-fold anticodon-binding domain"/>
    <property type="match status" value="1"/>
</dbReference>
<dbReference type="Gene3D" id="2.40.50.140">
    <property type="entry name" value="Nucleic acid-binding proteins"/>
    <property type="match status" value="1"/>
</dbReference>
<dbReference type="Gene3D" id="3.50.40.10">
    <property type="entry name" value="Phenylalanyl-trna Synthetase, Chain B, domain 3"/>
    <property type="match status" value="1"/>
</dbReference>
<dbReference type="HAMAP" id="MF_00283">
    <property type="entry name" value="Phe_tRNA_synth_beta1"/>
    <property type="match status" value="1"/>
</dbReference>
<dbReference type="InterPro" id="IPR045864">
    <property type="entry name" value="aa-tRNA-synth_II/BPL/LPL"/>
</dbReference>
<dbReference type="InterPro" id="IPR005146">
    <property type="entry name" value="B3/B4_tRNA-bd"/>
</dbReference>
<dbReference type="InterPro" id="IPR009061">
    <property type="entry name" value="DNA-bd_dom_put_sf"/>
</dbReference>
<dbReference type="InterPro" id="IPR005121">
    <property type="entry name" value="Fdx_antiC-bd"/>
</dbReference>
<dbReference type="InterPro" id="IPR036690">
    <property type="entry name" value="Fdx_antiC-bd_sf"/>
</dbReference>
<dbReference type="InterPro" id="IPR012340">
    <property type="entry name" value="NA-bd_OB-fold"/>
</dbReference>
<dbReference type="InterPro" id="IPR045060">
    <property type="entry name" value="Phe-tRNA-ligase_IIc_bsu"/>
</dbReference>
<dbReference type="InterPro" id="IPR004532">
    <property type="entry name" value="Phe-tRNA-ligase_IIc_bsu_bact"/>
</dbReference>
<dbReference type="InterPro" id="IPR020825">
    <property type="entry name" value="Phe-tRNA_synthase-like_B3/B4"/>
</dbReference>
<dbReference type="InterPro" id="IPR041616">
    <property type="entry name" value="PheRS_beta_core"/>
</dbReference>
<dbReference type="InterPro" id="IPR002547">
    <property type="entry name" value="tRNA-bd_dom"/>
</dbReference>
<dbReference type="InterPro" id="IPR033714">
    <property type="entry name" value="tRNA_bind_bactPheRS"/>
</dbReference>
<dbReference type="InterPro" id="IPR005147">
    <property type="entry name" value="tRNA_synthase_B5-dom"/>
</dbReference>
<dbReference type="NCBIfam" id="TIGR00472">
    <property type="entry name" value="pheT_bact"/>
    <property type="match status" value="1"/>
</dbReference>
<dbReference type="NCBIfam" id="NF045760">
    <property type="entry name" value="YtpR"/>
    <property type="match status" value="1"/>
</dbReference>
<dbReference type="PANTHER" id="PTHR10947:SF0">
    <property type="entry name" value="PHENYLALANINE--TRNA LIGASE BETA SUBUNIT"/>
    <property type="match status" value="1"/>
</dbReference>
<dbReference type="PANTHER" id="PTHR10947">
    <property type="entry name" value="PHENYLALANYL-TRNA SYNTHETASE BETA CHAIN AND LEUCINE-RICH REPEAT-CONTAINING PROTEIN 47"/>
    <property type="match status" value="1"/>
</dbReference>
<dbReference type="Pfam" id="PF03483">
    <property type="entry name" value="B3_4"/>
    <property type="match status" value="1"/>
</dbReference>
<dbReference type="Pfam" id="PF03484">
    <property type="entry name" value="B5"/>
    <property type="match status" value="1"/>
</dbReference>
<dbReference type="Pfam" id="PF03147">
    <property type="entry name" value="FDX-ACB"/>
    <property type="match status" value="1"/>
</dbReference>
<dbReference type="Pfam" id="PF01588">
    <property type="entry name" value="tRNA_bind"/>
    <property type="match status" value="1"/>
</dbReference>
<dbReference type="Pfam" id="PF17759">
    <property type="entry name" value="tRNA_synthFbeta"/>
    <property type="match status" value="1"/>
</dbReference>
<dbReference type="SMART" id="SM00873">
    <property type="entry name" value="B3_4"/>
    <property type="match status" value="1"/>
</dbReference>
<dbReference type="SMART" id="SM00874">
    <property type="entry name" value="B5"/>
    <property type="match status" value="1"/>
</dbReference>
<dbReference type="SMART" id="SM00896">
    <property type="entry name" value="FDX-ACB"/>
    <property type="match status" value="1"/>
</dbReference>
<dbReference type="SUPFAM" id="SSF54991">
    <property type="entry name" value="Anticodon-binding domain of PheRS"/>
    <property type="match status" value="1"/>
</dbReference>
<dbReference type="SUPFAM" id="SSF55681">
    <property type="entry name" value="Class II aaRS and biotin synthetases"/>
    <property type="match status" value="1"/>
</dbReference>
<dbReference type="SUPFAM" id="SSF50249">
    <property type="entry name" value="Nucleic acid-binding proteins"/>
    <property type="match status" value="1"/>
</dbReference>
<dbReference type="SUPFAM" id="SSF56037">
    <property type="entry name" value="PheT/TilS domain"/>
    <property type="match status" value="1"/>
</dbReference>
<dbReference type="SUPFAM" id="SSF46955">
    <property type="entry name" value="Putative DNA-binding domain"/>
    <property type="match status" value="1"/>
</dbReference>
<dbReference type="PROSITE" id="PS51483">
    <property type="entry name" value="B5"/>
    <property type="match status" value="1"/>
</dbReference>
<dbReference type="PROSITE" id="PS51447">
    <property type="entry name" value="FDX_ACB"/>
    <property type="match status" value="1"/>
</dbReference>
<dbReference type="PROSITE" id="PS50886">
    <property type="entry name" value="TRBD"/>
    <property type="match status" value="1"/>
</dbReference>
<gene>
    <name type="primary">pheT</name>
    <name type="ordered locus">Synpcc7942_1293</name>
</gene>
<reference key="1">
    <citation type="journal article" date="1996" name="J. Appl. Phycol.">
        <title>Phenylalanyl-tRNA synthetase gene, pheT, from Synechococcus PCC 7942.</title>
        <authorList>
            <person name="Cranenburgh R.M."/>
            <person name="Robinson N.J."/>
        </authorList>
    </citation>
    <scope>NUCLEOTIDE SEQUENCE [GENOMIC DNA]</scope>
</reference>
<reference key="2">
    <citation type="submission" date="2005-08" db="EMBL/GenBank/DDBJ databases">
        <title>Complete sequence of chromosome 1 of Synechococcus elongatus PCC 7942.</title>
        <authorList>
            <consortium name="US DOE Joint Genome Institute"/>
            <person name="Copeland A."/>
            <person name="Lucas S."/>
            <person name="Lapidus A."/>
            <person name="Barry K."/>
            <person name="Detter J.C."/>
            <person name="Glavina T."/>
            <person name="Hammon N."/>
            <person name="Israni S."/>
            <person name="Pitluck S."/>
            <person name="Schmutz J."/>
            <person name="Larimer F."/>
            <person name="Land M."/>
            <person name="Kyrpides N."/>
            <person name="Lykidis A."/>
            <person name="Golden S."/>
            <person name="Richardson P."/>
        </authorList>
    </citation>
    <scope>NUCLEOTIDE SEQUENCE [LARGE SCALE GENOMIC DNA]</scope>
    <source>
        <strain>ATCC 33912 / PCC 7942 / FACHB-805</strain>
    </source>
</reference>
<organism>
    <name type="scientific">Synechococcus elongatus (strain ATCC 33912 / PCC 7942 / FACHB-805)</name>
    <name type="common">Anacystis nidulans R2</name>
    <dbReference type="NCBI Taxonomy" id="1140"/>
    <lineage>
        <taxon>Bacteria</taxon>
        <taxon>Bacillati</taxon>
        <taxon>Cyanobacteriota</taxon>
        <taxon>Cyanophyceae</taxon>
        <taxon>Synechococcales</taxon>
        <taxon>Synechococcaceae</taxon>
        <taxon>Synechococcus</taxon>
    </lineage>
</organism>
<accession>P74764</accession>
<accession>Q31NP6</accession>
<feature type="chain" id="PRO_0000126972" description="Phenylalanine--tRNA ligase beta subunit">
    <location>
        <begin position="1"/>
        <end position="810"/>
    </location>
</feature>
<feature type="domain" description="tRNA-binding">
    <location>
        <begin position="39"/>
        <end position="151"/>
    </location>
</feature>
<feature type="domain" description="B5">
    <location>
        <begin position="408"/>
        <end position="494"/>
    </location>
</feature>
<feature type="domain" description="FDX-ACB">
    <location>
        <begin position="716"/>
        <end position="809"/>
    </location>
</feature>
<feature type="binding site" evidence="1">
    <location>
        <position position="472"/>
    </location>
    <ligand>
        <name>Mg(2+)</name>
        <dbReference type="ChEBI" id="CHEBI:18420"/>
        <note>shared with alpha subunit</note>
    </ligand>
</feature>
<feature type="binding site" evidence="1">
    <location>
        <position position="478"/>
    </location>
    <ligand>
        <name>Mg(2+)</name>
        <dbReference type="ChEBI" id="CHEBI:18420"/>
        <note>shared with alpha subunit</note>
    </ligand>
</feature>
<feature type="binding site" evidence="1">
    <location>
        <position position="481"/>
    </location>
    <ligand>
        <name>Mg(2+)</name>
        <dbReference type="ChEBI" id="CHEBI:18420"/>
        <note>shared with alpha subunit</note>
    </ligand>
</feature>
<feature type="binding site" evidence="1">
    <location>
        <position position="482"/>
    </location>
    <ligand>
        <name>Mg(2+)</name>
        <dbReference type="ChEBI" id="CHEBI:18420"/>
        <note>shared with alpha subunit</note>
    </ligand>
</feature>
<feature type="sequence conflict" description="In Ref. 1; CAA64071." evidence="2" ref="1">
    <original>ELQTYPELPCLAISLQSEAC</original>
    <variation>GTADLSRTTLSWRSLYKVKPG</variation>
    <location>
        <begin position="196"/>
        <end position="215"/>
    </location>
</feature>
<feature type="sequence conflict" description="In Ref. 1; CAA64071." evidence="2" ref="1">
    <original>A</original>
    <variation>P</variation>
    <location>
        <position position="343"/>
    </location>
</feature>
<feature type="sequence conflict" description="In Ref. 1; CAA64071." evidence="2" ref="1">
    <location>
        <begin position="600"/>
        <end position="602"/>
    </location>
</feature>
<keyword id="KW-0030">Aminoacyl-tRNA synthetase</keyword>
<keyword id="KW-0067">ATP-binding</keyword>
<keyword id="KW-0963">Cytoplasm</keyword>
<keyword id="KW-0436">Ligase</keyword>
<keyword id="KW-0460">Magnesium</keyword>
<keyword id="KW-0479">Metal-binding</keyword>
<keyword id="KW-0547">Nucleotide-binding</keyword>
<keyword id="KW-0648">Protein biosynthesis</keyword>
<keyword id="KW-1185">Reference proteome</keyword>
<keyword id="KW-0694">RNA-binding</keyword>
<keyword id="KW-0820">tRNA-binding</keyword>
<protein>
    <recommendedName>
        <fullName>Phenylalanine--tRNA ligase beta subunit</fullName>
        <ecNumber>6.1.1.20</ecNumber>
    </recommendedName>
    <alternativeName>
        <fullName>Phenylalanyl-tRNA synthetase beta subunit</fullName>
        <shortName>PheRS</shortName>
    </alternativeName>
</protein>